<keyword id="KW-0067">ATP-binding</keyword>
<keyword id="KW-0963">Cytoplasm</keyword>
<keyword id="KW-0227">DNA damage</keyword>
<keyword id="KW-0233">DNA recombination</keyword>
<keyword id="KW-0234">DNA repair</keyword>
<keyword id="KW-0238">DNA-binding</keyword>
<keyword id="KW-0547">Nucleotide-binding</keyword>
<keyword id="KW-0742">SOS response</keyword>
<dbReference type="EMBL" id="X76076">
    <property type="protein sequence ID" value="CAA53674.1"/>
    <property type="molecule type" value="Genomic_DNA"/>
</dbReference>
<dbReference type="PIR" id="S38674">
    <property type="entry name" value="S38674"/>
</dbReference>
<dbReference type="SMR" id="P48294"/>
<dbReference type="GO" id="GO:0005829">
    <property type="term" value="C:cytosol"/>
    <property type="evidence" value="ECO:0007669"/>
    <property type="project" value="TreeGrafter"/>
</dbReference>
<dbReference type="GO" id="GO:0005524">
    <property type="term" value="F:ATP binding"/>
    <property type="evidence" value="ECO:0007669"/>
    <property type="project" value="UniProtKB-UniRule"/>
</dbReference>
<dbReference type="GO" id="GO:0016887">
    <property type="term" value="F:ATP hydrolysis activity"/>
    <property type="evidence" value="ECO:0007669"/>
    <property type="project" value="InterPro"/>
</dbReference>
<dbReference type="GO" id="GO:0140664">
    <property type="term" value="F:ATP-dependent DNA damage sensor activity"/>
    <property type="evidence" value="ECO:0007669"/>
    <property type="project" value="InterPro"/>
</dbReference>
<dbReference type="GO" id="GO:0003684">
    <property type="term" value="F:damaged DNA binding"/>
    <property type="evidence" value="ECO:0007669"/>
    <property type="project" value="UniProtKB-UniRule"/>
</dbReference>
<dbReference type="GO" id="GO:0003697">
    <property type="term" value="F:single-stranded DNA binding"/>
    <property type="evidence" value="ECO:0007669"/>
    <property type="project" value="UniProtKB-UniRule"/>
</dbReference>
<dbReference type="GO" id="GO:0006310">
    <property type="term" value="P:DNA recombination"/>
    <property type="evidence" value="ECO:0007669"/>
    <property type="project" value="UniProtKB-UniRule"/>
</dbReference>
<dbReference type="GO" id="GO:0006281">
    <property type="term" value="P:DNA repair"/>
    <property type="evidence" value="ECO:0007669"/>
    <property type="project" value="UniProtKB-UniRule"/>
</dbReference>
<dbReference type="GO" id="GO:0009432">
    <property type="term" value="P:SOS response"/>
    <property type="evidence" value="ECO:0007669"/>
    <property type="project" value="UniProtKB-UniRule"/>
</dbReference>
<dbReference type="CDD" id="cd00983">
    <property type="entry name" value="RecA"/>
    <property type="match status" value="1"/>
</dbReference>
<dbReference type="FunFam" id="3.40.50.300:FF:000087">
    <property type="entry name" value="Recombinase RecA"/>
    <property type="match status" value="1"/>
</dbReference>
<dbReference type="Gene3D" id="3.40.50.300">
    <property type="entry name" value="P-loop containing nucleotide triphosphate hydrolases"/>
    <property type="match status" value="1"/>
</dbReference>
<dbReference type="HAMAP" id="MF_00268">
    <property type="entry name" value="RecA"/>
    <property type="match status" value="1"/>
</dbReference>
<dbReference type="InterPro" id="IPR003593">
    <property type="entry name" value="AAA+_ATPase"/>
</dbReference>
<dbReference type="InterPro" id="IPR013765">
    <property type="entry name" value="DNA_recomb/repair_RecA"/>
</dbReference>
<dbReference type="InterPro" id="IPR020584">
    <property type="entry name" value="DNA_recomb/repair_RecA_CS"/>
</dbReference>
<dbReference type="InterPro" id="IPR027417">
    <property type="entry name" value="P-loop_NTPase"/>
</dbReference>
<dbReference type="InterPro" id="IPR049261">
    <property type="entry name" value="RecA-like_C"/>
</dbReference>
<dbReference type="InterPro" id="IPR049428">
    <property type="entry name" value="RecA-like_N"/>
</dbReference>
<dbReference type="InterPro" id="IPR020588">
    <property type="entry name" value="RecA_ATP-bd"/>
</dbReference>
<dbReference type="InterPro" id="IPR023400">
    <property type="entry name" value="RecA_C_sf"/>
</dbReference>
<dbReference type="InterPro" id="IPR020587">
    <property type="entry name" value="RecA_monomer-monomer_interface"/>
</dbReference>
<dbReference type="NCBIfam" id="TIGR02012">
    <property type="entry name" value="tigrfam_recA"/>
    <property type="match status" value="1"/>
</dbReference>
<dbReference type="PANTHER" id="PTHR45900:SF1">
    <property type="entry name" value="MITOCHONDRIAL DNA REPAIR PROTEIN RECA HOMOLOG-RELATED"/>
    <property type="match status" value="1"/>
</dbReference>
<dbReference type="PANTHER" id="PTHR45900">
    <property type="entry name" value="RECA"/>
    <property type="match status" value="1"/>
</dbReference>
<dbReference type="Pfam" id="PF00154">
    <property type="entry name" value="RecA"/>
    <property type="match status" value="1"/>
</dbReference>
<dbReference type="Pfam" id="PF21096">
    <property type="entry name" value="RecA_C"/>
    <property type="match status" value="1"/>
</dbReference>
<dbReference type="PRINTS" id="PR00142">
    <property type="entry name" value="RECA"/>
</dbReference>
<dbReference type="SMART" id="SM00382">
    <property type="entry name" value="AAA"/>
    <property type="match status" value="1"/>
</dbReference>
<dbReference type="SUPFAM" id="SSF52540">
    <property type="entry name" value="P-loop containing nucleoside triphosphate hydrolases"/>
    <property type="match status" value="1"/>
</dbReference>
<dbReference type="SUPFAM" id="SSF54752">
    <property type="entry name" value="RecA protein, C-terminal domain"/>
    <property type="match status" value="1"/>
</dbReference>
<dbReference type="PROSITE" id="PS00321">
    <property type="entry name" value="RECA_1"/>
    <property type="match status" value="1"/>
</dbReference>
<dbReference type="PROSITE" id="PS50162">
    <property type="entry name" value="RECA_2"/>
    <property type="match status" value="1"/>
</dbReference>
<dbReference type="PROSITE" id="PS50163">
    <property type="entry name" value="RECA_3"/>
    <property type="match status" value="1"/>
</dbReference>
<sequence length="374" mass="39552">MAGTDREKALDAALAQIERQFGKGAVMRMGDRTNEPIEVIPTGSTALDVALGVGGIPRGRVVEVYGPESSGKTTLTLHAVANAQKAGGQVAFVDAEHALDPEYAKKLGVDIDNLILSQPDNGEQALEIVDMLVRSGALDLIVIDSVAALVPRAEIEGEMGDSHVGLQARLMSQALRKITSALNQSKTTAIFINQLREKIGVMFGSPETTTGGRALKFYASVRLDIRRIETLKDGTDAVGNRTRVKVVKNKVAPPFKQAEFDILYGQGISREGGLIDMGVENGFVRKAGAWYTYEGDQLGQGKENARNFLKDNPDLANEIEKKIKQKLGVGVHPEESATEPGADAASAAPADAAPAVPAPTTAKATKSKAAAAKS</sequence>
<name>RECA_STRLI</name>
<gene>
    <name evidence="1" type="primary">recA</name>
</gene>
<comment type="function">
    <text evidence="1">Can catalyze the hydrolysis of ATP in the presence of single-stranded DNA, the ATP-dependent uptake of single-stranded DNA by duplex DNA, and the ATP-dependent hybridization of homologous single-stranded DNAs. It interacts with LexA causing its activation and leading to its autocatalytic cleavage.</text>
</comment>
<comment type="subcellular location">
    <subcellularLocation>
        <location evidence="1">Cytoplasm</location>
    </subcellularLocation>
</comment>
<comment type="similarity">
    <text evidence="1">Belongs to the RecA family.</text>
</comment>
<accession>P48294</accession>
<protein>
    <recommendedName>
        <fullName evidence="1">Protein RecA</fullName>
    </recommendedName>
    <alternativeName>
        <fullName evidence="1">Recombinase A</fullName>
    </alternativeName>
</protein>
<feature type="chain" id="PRO_0000122856" description="Protein RecA">
    <location>
        <begin position="1"/>
        <end position="374"/>
    </location>
</feature>
<feature type="region of interest" description="Disordered" evidence="2">
    <location>
        <begin position="327"/>
        <end position="374"/>
    </location>
</feature>
<feature type="compositionally biased region" description="Low complexity" evidence="2">
    <location>
        <begin position="338"/>
        <end position="374"/>
    </location>
</feature>
<feature type="binding site" evidence="1">
    <location>
        <begin position="66"/>
        <end position="73"/>
    </location>
    <ligand>
        <name>ATP</name>
        <dbReference type="ChEBI" id="CHEBI:30616"/>
    </ligand>
</feature>
<organism>
    <name type="scientific">Streptomyces lividans</name>
    <dbReference type="NCBI Taxonomy" id="1916"/>
    <lineage>
        <taxon>Bacteria</taxon>
        <taxon>Bacillati</taxon>
        <taxon>Actinomycetota</taxon>
        <taxon>Actinomycetes</taxon>
        <taxon>Kitasatosporales</taxon>
        <taxon>Streptomycetaceae</taxon>
        <taxon>Streptomyces</taxon>
    </lineage>
</organism>
<reference key="1">
    <citation type="journal article" date="1994" name="FEMS Microbiol. Lett.">
        <title>Identification, isolation and sequencing of the recA gene of Streptomyces lividans TK24.</title>
        <authorList>
            <person name="Nussbaumer B."/>
            <person name="Wohlleben W."/>
        </authorList>
    </citation>
    <scope>NUCLEOTIDE SEQUENCE [GENOMIC DNA]</scope>
    <source>
        <strain>TK24</strain>
    </source>
</reference>
<proteinExistence type="inferred from homology"/>
<evidence type="ECO:0000255" key="1">
    <source>
        <dbReference type="HAMAP-Rule" id="MF_00268"/>
    </source>
</evidence>
<evidence type="ECO:0000256" key="2">
    <source>
        <dbReference type="SAM" id="MobiDB-lite"/>
    </source>
</evidence>